<feature type="chain" id="PRO_1000077130" description="Arginine repressor">
    <location>
        <begin position="1"/>
        <end position="179"/>
    </location>
</feature>
<reference key="1">
    <citation type="journal article" date="2008" name="J. Bacteriol.">
        <title>Genome sequence of the fish pathogen Renibacterium salmoninarum suggests reductive evolution away from an environmental Arthrobacter ancestor.</title>
        <authorList>
            <person name="Wiens G.D."/>
            <person name="Rockey D.D."/>
            <person name="Wu Z."/>
            <person name="Chang J."/>
            <person name="Levy R."/>
            <person name="Crane S."/>
            <person name="Chen D.S."/>
            <person name="Capri G.R."/>
            <person name="Burnett J.R."/>
            <person name="Sudheesh P.S."/>
            <person name="Schipma M.J."/>
            <person name="Burd H."/>
            <person name="Bhattacharyya A."/>
            <person name="Rhodes L.D."/>
            <person name="Kaul R."/>
            <person name="Strom M.S."/>
        </authorList>
    </citation>
    <scope>NUCLEOTIDE SEQUENCE [LARGE SCALE GENOMIC DNA]</scope>
    <source>
        <strain>ATCC 33209 / DSM 20767 / JCM 11484 / NBRC 15589 / NCIMB 2235</strain>
    </source>
</reference>
<keyword id="KW-0028">Amino-acid biosynthesis</keyword>
<keyword id="KW-0055">Arginine biosynthesis</keyword>
<keyword id="KW-0963">Cytoplasm</keyword>
<keyword id="KW-0238">DNA-binding</keyword>
<keyword id="KW-1185">Reference proteome</keyword>
<keyword id="KW-0678">Repressor</keyword>
<keyword id="KW-0804">Transcription</keyword>
<keyword id="KW-0805">Transcription regulation</keyword>
<sequence>MSAESAAIVQPIALIPATKTARQARIAALLTAQSVRSQAELAALLADDGVQVTQATLSRDLVELGAVRVRADGGLVYAVPQAGVDRTPHAAVSKEYLDARMTRLCAELLVTAEASANLVVLRTPPGAANFLAMAIDHSVLPDILGTIAGDDTVLVIARDPFGGAAIAERFLQFAEEPGT</sequence>
<protein>
    <recommendedName>
        <fullName evidence="1">Arginine repressor</fullName>
    </recommendedName>
</protein>
<name>ARGR_RENSM</name>
<dbReference type="EMBL" id="CP000910">
    <property type="protein sequence ID" value="ABY22529.1"/>
    <property type="molecule type" value="Genomic_DNA"/>
</dbReference>
<dbReference type="RefSeq" id="WP_012244226.1">
    <property type="nucleotide sequence ID" value="NC_010168.1"/>
</dbReference>
<dbReference type="SMR" id="A9WQ89"/>
<dbReference type="STRING" id="288705.RSal33209_0782"/>
<dbReference type="KEGG" id="rsa:RSal33209_0782"/>
<dbReference type="eggNOG" id="COG1438">
    <property type="taxonomic scope" value="Bacteria"/>
</dbReference>
<dbReference type="HOGENOM" id="CLU_097103_1_1_11"/>
<dbReference type="UniPathway" id="UPA00068"/>
<dbReference type="Proteomes" id="UP000002007">
    <property type="component" value="Chromosome"/>
</dbReference>
<dbReference type="GO" id="GO:0005737">
    <property type="term" value="C:cytoplasm"/>
    <property type="evidence" value="ECO:0007669"/>
    <property type="project" value="UniProtKB-SubCell"/>
</dbReference>
<dbReference type="GO" id="GO:0034618">
    <property type="term" value="F:arginine binding"/>
    <property type="evidence" value="ECO:0007669"/>
    <property type="project" value="InterPro"/>
</dbReference>
<dbReference type="GO" id="GO:0003677">
    <property type="term" value="F:DNA binding"/>
    <property type="evidence" value="ECO:0007669"/>
    <property type="project" value="UniProtKB-KW"/>
</dbReference>
<dbReference type="GO" id="GO:0003700">
    <property type="term" value="F:DNA-binding transcription factor activity"/>
    <property type="evidence" value="ECO:0007669"/>
    <property type="project" value="UniProtKB-UniRule"/>
</dbReference>
<dbReference type="GO" id="GO:0006526">
    <property type="term" value="P:L-arginine biosynthetic process"/>
    <property type="evidence" value="ECO:0007669"/>
    <property type="project" value="UniProtKB-UniPathway"/>
</dbReference>
<dbReference type="GO" id="GO:0051259">
    <property type="term" value="P:protein complex oligomerization"/>
    <property type="evidence" value="ECO:0007669"/>
    <property type="project" value="InterPro"/>
</dbReference>
<dbReference type="GO" id="GO:1900079">
    <property type="term" value="P:regulation of arginine biosynthetic process"/>
    <property type="evidence" value="ECO:0007669"/>
    <property type="project" value="UniProtKB-UniRule"/>
</dbReference>
<dbReference type="Gene3D" id="3.30.1360.40">
    <property type="match status" value="1"/>
</dbReference>
<dbReference type="Gene3D" id="1.10.10.10">
    <property type="entry name" value="Winged helix-like DNA-binding domain superfamily/Winged helix DNA-binding domain"/>
    <property type="match status" value="1"/>
</dbReference>
<dbReference type="HAMAP" id="MF_00173">
    <property type="entry name" value="Arg_repressor"/>
    <property type="match status" value="1"/>
</dbReference>
<dbReference type="InterPro" id="IPR001669">
    <property type="entry name" value="Arg_repress"/>
</dbReference>
<dbReference type="InterPro" id="IPR020899">
    <property type="entry name" value="Arg_repress_C"/>
</dbReference>
<dbReference type="InterPro" id="IPR036251">
    <property type="entry name" value="Arg_repress_C_sf"/>
</dbReference>
<dbReference type="InterPro" id="IPR020900">
    <property type="entry name" value="Arg_repress_DNA-bd"/>
</dbReference>
<dbReference type="InterPro" id="IPR036388">
    <property type="entry name" value="WH-like_DNA-bd_sf"/>
</dbReference>
<dbReference type="InterPro" id="IPR036390">
    <property type="entry name" value="WH_DNA-bd_sf"/>
</dbReference>
<dbReference type="NCBIfam" id="TIGR01529">
    <property type="entry name" value="argR_whole"/>
    <property type="match status" value="1"/>
</dbReference>
<dbReference type="NCBIfam" id="NF002880">
    <property type="entry name" value="PRK03341.1"/>
    <property type="match status" value="1"/>
</dbReference>
<dbReference type="PANTHER" id="PTHR34471">
    <property type="entry name" value="ARGININE REPRESSOR"/>
    <property type="match status" value="1"/>
</dbReference>
<dbReference type="PANTHER" id="PTHR34471:SF1">
    <property type="entry name" value="ARGININE REPRESSOR"/>
    <property type="match status" value="1"/>
</dbReference>
<dbReference type="Pfam" id="PF01316">
    <property type="entry name" value="Arg_repressor"/>
    <property type="match status" value="1"/>
</dbReference>
<dbReference type="Pfam" id="PF02863">
    <property type="entry name" value="Arg_repressor_C"/>
    <property type="match status" value="1"/>
</dbReference>
<dbReference type="PRINTS" id="PR01467">
    <property type="entry name" value="ARGREPRESSOR"/>
</dbReference>
<dbReference type="SUPFAM" id="SSF55252">
    <property type="entry name" value="C-terminal domain of arginine repressor"/>
    <property type="match status" value="1"/>
</dbReference>
<dbReference type="SUPFAM" id="SSF46785">
    <property type="entry name" value="Winged helix' DNA-binding domain"/>
    <property type="match status" value="1"/>
</dbReference>
<comment type="function">
    <text evidence="1">Regulates arginine biosynthesis genes.</text>
</comment>
<comment type="pathway">
    <text>Amino-acid biosynthesis; L-arginine biosynthesis [regulation].</text>
</comment>
<comment type="subcellular location">
    <subcellularLocation>
        <location evidence="1">Cytoplasm</location>
    </subcellularLocation>
</comment>
<comment type="similarity">
    <text evidence="1">Belongs to the ArgR family.</text>
</comment>
<gene>
    <name evidence="1" type="primary">argR</name>
    <name type="ordered locus">RSal33209_0782</name>
</gene>
<accession>A9WQ89</accession>
<evidence type="ECO:0000255" key="1">
    <source>
        <dbReference type="HAMAP-Rule" id="MF_00173"/>
    </source>
</evidence>
<proteinExistence type="inferred from homology"/>
<organism>
    <name type="scientific">Renibacterium salmoninarum (strain ATCC 33209 / DSM 20767 / JCM 11484 / NBRC 15589 / NCIMB 2235)</name>
    <dbReference type="NCBI Taxonomy" id="288705"/>
    <lineage>
        <taxon>Bacteria</taxon>
        <taxon>Bacillati</taxon>
        <taxon>Actinomycetota</taxon>
        <taxon>Actinomycetes</taxon>
        <taxon>Micrococcales</taxon>
        <taxon>Micrococcaceae</taxon>
        <taxon>Renibacterium</taxon>
    </lineage>
</organism>